<evidence type="ECO:0000255" key="1">
    <source>
        <dbReference type="PROSITE-ProRule" id="PRU01182"/>
    </source>
</evidence>
<evidence type="ECO:0000305" key="2"/>
<accession>Q5KWN3</accession>
<feature type="chain" id="PRO_0000190700" description="UPF0758 protein GK2618">
    <location>
        <begin position="1"/>
        <end position="226"/>
    </location>
</feature>
<feature type="domain" description="MPN" evidence="1">
    <location>
        <begin position="104"/>
        <end position="226"/>
    </location>
</feature>
<feature type="short sequence motif" description="JAMM motif" evidence="1">
    <location>
        <begin position="175"/>
        <end position="188"/>
    </location>
</feature>
<feature type="binding site" evidence="1">
    <location>
        <position position="175"/>
    </location>
    <ligand>
        <name>Zn(2+)</name>
        <dbReference type="ChEBI" id="CHEBI:29105"/>
        <note>catalytic</note>
    </ligand>
</feature>
<feature type="binding site" evidence="1">
    <location>
        <position position="177"/>
    </location>
    <ligand>
        <name>Zn(2+)</name>
        <dbReference type="ChEBI" id="CHEBI:29105"/>
        <note>catalytic</note>
    </ligand>
</feature>
<feature type="binding site" evidence="1">
    <location>
        <position position="188"/>
    </location>
    <ligand>
        <name>Zn(2+)</name>
        <dbReference type="ChEBI" id="CHEBI:29105"/>
        <note>catalytic</note>
    </ligand>
</feature>
<protein>
    <recommendedName>
        <fullName>UPF0758 protein GK2618</fullName>
    </recommendedName>
</protein>
<reference key="1">
    <citation type="journal article" date="2004" name="Nucleic Acids Res.">
        <title>Thermoadaptation trait revealed by the genome sequence of thermophilic Geobacillus kaustophilus.</title>
        <authorList>
            <person name="Takami H."/>
            <person name="Takaki Y."/>
            <person name="Chee G.-J."/>
            <person name="Nishi S."/>
            <person name="Shimamura S."/>
            <person name="Suzuki H."/>
            <person name="Matsui S."/>
            <person name="Uchiyama I."/>
        </authorList>
    </citation>
    <scope>NUCLEOTIDE SEQUENCE [LARGE SCALE GENOMIC DNA]</scope>
    <source>
        <strain>HTA426</strain>
    </source>
</reference>
<sequence length="226" mass="25508">MAWMIRDVPKDSRPRERLLSSGPESLSDHELIAILLRTGTKEESVVQLAQRLLRHFEGLRPLKDATVEEMTNIKGIGPTKAVQILAALELGRRIHQSGCADRYVIRCPEDGAKYVMEDMRFLSQEHFVAIYLNTKNQVIYRKTVFIGSLNASIVHPREVFKEAIKRSAASVICVHNHPSGDPTPSREDIDVTKRLAECGRIIGIELLDHLIIGDQKFISLKEKGYV</sequence>
<name>Y2618_GEOKA</name>
<organism>
    <name type="scientific">Geobacillus kaustophilus (strain HTA426)</name>
    <dbReference type="NCBI Taxonomy" id="235909"/>
    <lineage>
        <taxon>Bacteria</taxon>
        <taxon>Bacillati</taxon>
        <taxon>Bacillota</taxon>
        <taxon>Bacilli</taxon>
        <taxon>Bacillales</taxon>
        <taxon>Anoxybacillaceae</taxon>
        <taxon>Geobacillus</taxon>
        <taxon>Geobacillus thermoleovorans group</taxon>
    </lineage>
</organism>
<dbReference type="EMBL" id="BA000043">
    <property type="protein sequence ID" value="BAD76903.1"/>
    <property type="molecule type" value="Genomic_DNA"/>
</dbReference>
<dbReference type="SMR" id="Q5KWN3"/>
<dbReference type="STRING" id="235909.GK2618"/>
<dbReference type="KEGG" id="gka:GK2618"/>
<dbReference type="PATRIC" id="fig|235909.7.peg.2797"/>
<dbReference type="eggNOG" id="COG2003">
    <property type="taxonomic scope" value="Bacteria"/>
</dbReference>
<dbReference type="HOGENOM" id="CLU_073529_0_2_9"/>
<dbReference type="Proteomes" id="UP000001172">
    <property type="component" value="Chromosome"/>
</dbReference>
<dbReference type="GO" id="GO:0046872">
    <property type="term" value="F:metal ion binding"/>
    <property type="evidence" value="ECO:0007669"/>
    <property type="project" value="UniProtKB-KW"/>
</dbReference>
<dbReference type="GO" id="GO:0008237">
    <property type="term" value="F:metallopeptidase activity"/>
    <property type="evidence" value="ECO:0007669"/>
    <property type="project" value="UniProtKB-KW"/>
</dbReference>
<dbReference type="GO" id="GO:0006508">
    <property type="term" value="P:proteolysis"/>
    <property type="evidence" value="ECO:0007669"/>
    <property type="project" value="UniProtKB-KW"/>
</dbReference>
<dbReference type="CDD" id="cd08071">
    <property type="entry name" value="MPN_DUF2466"/>
    <property type="match status" value="1"/>
</dbReference>
<dbReference type="Gene3D" id="1.10.150.20">
    <property type="entry name" value="5' to 3' exonuclease, C-terminal subdomain"/>
    <property type="match status" value="1"/>
</dbReference>
<dbReference type="Gene3D" id="3.40.140.10">
    <property type="entry name" value="Cytidine Deaminase, domain 2"/>
    <property type="match status" value="1"/>
</dbReference>
<dbReference type="InterPro" id="IPR037518">
    <property type="entry name" value="MPN"/>
</dbReference>
<dbReference type="InterPro" id="IPR025657">
    <property type="entry name" value="RadC_JAB"/>
</dbReference>
<dbReference type="InterPro" id="IPR010994">
    <property type="entry name" value="RuvA_2-like"/>
</dbReference>
<dbReference type="InterPro" id="IPR001405">
    <property type="entry name" value="UPF0758"/>
</dbReference>
<dbReference type="InterPro" id="IPR020891">
    <property type="entry name" value="UPF0758_CS"/>
</dbReference>
<dbReference type="InterPro" id="IPR046778">
    <property type="entry name" value="UPF0758_N"/>
</dbReference>
<dbReference type="NCBIfam" id="NF000642">
    <property type="entry name" value="PRK00024.1"/>
    <property type="match status" value="1"/>
</dbReference>
<dbReference type="NCBIfam" id="TIGR00608">
    <property type="entry name" value="radc"/>
    <property type="match status" value="1"/>
</dbReference>
<dbReference type="PANTHER" id="PTHR30471">
    <property type="entry name" value="DNA REPAIR PROTEIN RADC"/>
    <property type="match status" value="1"/>
</dbReference>
<dbReference type="PANTHER" id="PTHR30471:SF3">
    <property type="entry name" value="UPF0758 PROTEIN YEES-RELATED"/>
    <property type="match status" value="1"/>
</dbReference>
<dbReference type="Pfam" id="PF04002">
    <property type="entry name" value="RadC"/>
    <property type="match status" value="1"/>
</dbReference>
<dbReference type="Pfam" id="PF20582">
    <property type="entry name" value="UPF0758_N"/>
    <property type="match status" value="1"/>
</dbReference>
<dbReference type="SUPFAM" id="SSF102712">
    <property type="entry name" value="JAB1/MPN domain"/>
    <property type="match status" value="1"/>
</dbReference>
<dbReference type="SUPFAM" id="SSF47781">
    <property type="entry name" value="RuvA domain 2-like"/>
    <property type="match status" value="1"/>
</dbReference>
<dbReference type="PROSITE" id="PS50249">
    <property type="entry name" value="MPN"/>
    <property type="match status" value="1"/>
</dbReference>
<dbReference type="PROSITE" id="PS01302">
    <property type="entry name" value="UPF0758"/>
    <property type="match status" value="1"/>
</dbReference>
<keyword id="KW-0378">Hydrolase</keyword>
<keyword id="KW-0479">Metal-binding</keyword>
<keyword id="KW-0482">Metalloprotease</keyword>
<keyword id="KW-0645">Protease</keyword>
<keyword id="KW-1185">Reference proteome</keyword>
<keyword id="KW-0862">Zinc</keyword>
<comment type="similarity">
    <text evidence="2">Belongs to the UPF0758 family.</text>
</comment>
<proteinExistence type="inferred from homology"/>
<gene>
    <name type="ordered locus">GK2618</name>
</gene>